<proteinExistence type="inferred from homology"/>
<gene>
    <name type="primary">ssu72</name>
    <name type="ORF">DDB_G0272871</name>
</gene>
<evidence type="ECO:0000250" key="1"/>
<evidence type="ECO:0000305" key="2"/>
<feature type="chain" id="PRO_0000330018" description="RNA polymerase II subunit A C-terminal domain phosphatase SSU72">
    <location>
        <begin position="1"/>
        <end position="214"/>
    </location>
</feature>
<name>SSU72_DICDI</name>
<protein>
    <recommendedName>
        <fullName>RNA polymerase II subunit A C-terminal domain phosphatase SSU72</fullName>
        <shortName>CTD phosphatase SSU72</shortName>
        <ecNumber>3.1.3.16</ecNumber>
    </recommendedName>
</protein>
<keyword id="KW-0378">Hydrolase</keyword>
<keyword id="KW-0507">mRNA processing</keyword>
<keyword id="KW-0539">Nucleus</keyword>
<keyword id="KW-0904">Protein phosphatase</keyword>
<keyword id="KW-1185">Reference proteome</keyword>
<comment type="function">
    <text evidence="1">May be involved in the C-terminal domain of RNA polymerase II dephosphorylation, RNA processing and termination.</text>
</comment>
<comment type="catalytic activity">
    <reaction>
        <text>O-phospho-L-seryl-[protein] + H2O = L-seryl-[protein] + phosphate</text>
        <dbReference type="Rhea" id="RHEA:20629"/>
        <dbReference type="Rhea" id="RHEA-COMP:9863"/>
        <dbReference type="Rhea" id="RHEA-COMP:11604"/>
        <dbReference type="ChEBI" id="CHEBI:15377"/>
        <dbReference type="ChEBI" id="CHEBI:29999"/>
        <dbReference type="ChEBI" id="CHEBI:43474"/>
        <dbReference type="ChEBI" id="CHEBI:83421"/>
        <dbReference type="EC" id="3.1.3.16"/>
    </reaction>
</comment>
<comment type="catalytic activity">
    <reaction>
        <text>O-phospho-L-threonyl-[protein] + H2O = L-threonyl-[protein] + phosphate</text>
        <dbReference type="Rhea" id="RHEA:47004"/>
        <dbReference type="Rhea" id="RHEA-COMP:11060"/>
        <dbReference type="Rhea" id="RHEA-COMP:11605"/>
        <dbReference type="ChEBI" id="CHEBI:15377"/>
        <dbReference type="ChEBI" id="CHEBI:30013"/>
        <dbReference type="ChEBI" id="CHEBI:43474"/>
        <dbReference type="ChEBI" id="CHEBI:61977"/>
        <dbReference type="EC" id="3.1.3.16"/>
    </reaction>
</comment>
<comment type="subcellular location">
    <subcellularLocation>
        <location evidence="1">Nucleus</location>
    </subcellularLocation>
</comment>
<comment type="similarity">
    <text evidence="2">Belongs to the SSU72 phosphatase family.</text>
</comment>
<reference key="1">
    <citation type="journal article" date="2002" name="Nature">
        <title>Sequence and analysis of chromosome 2 of Dictyostelium discoideum.</title>
        <authorList>
            <person name="Gloeckner G."/>
            <person name="Eichinger L."/>
            <person name="Szafranski K."/>
            <person name="Pachebat J.A."/>
            <person name="Bankier A.T."/>
            <person name="Dear P.H."/>
            <person name="Lehmann R."/>
            <person name="Baumgart C."/>
            <person name="Parra G."/>
            <person name="Abril J.F."/>
            <person name="Guigo R."/>
            <person name="Kumpf K."/>
            <person name="Tunggal B."/>
            <person name="Cox E.C."/>
            <person name="Quail M.A."/>
            <person name="Platzer M."/>
            <person name="Rosenthal A."/>
            <person name="Noegel A.A."/>
        </authorList>
    </citation>
    <scope>NUCLEOTIDE SEQUENCE [LARGE SCALE GENOMIC DNA]</scope>
    <source>
        <strain>AX4</strain>
    </source>
</reference>
<reference key="2">
    <citation type="journal article" date="2005" name="Nature">
        <title>The genome of the social amoeba Dictyostelium discoideum.</title>
        <authorList>
            <person name="Eichinger L."/>
            <person name="Pachebat J.A."/>
            <person name="Gloeckner G."/>
            <person name="Rajandream M.A."/>
            <person name="Sucgang R."/>
            <person name="Berriman M."/>
            <person name="Song J."/>
            <person name="Olsen R."/>
            <person name="Szafranski K."/>
            <person name="Xu Q."/>
            <person name="Tunggal B."/>
            <person name="Kummerfeld S."/>
            <person name="Madera M."/>
            <person name="Konfortov B.A."/>
            <person name="Rivero F."/>
            <person name="Bankier A.T."/>
            <person name="Lehmann R."/>
            <person name="Hamlin N."/>
            <person name="Davies R."/>
            <person name="Gaudet P."/>
            <person name="Fey P."/>
            <person name="Pilcher K."/>
            <person name="Chen G."/>
            <person name="Saunders D."/>
            <person name="Sodergren E.J."/>
            <person name="Davis P."/>
            <person name="Kerhornou A."/>
            <person name="Nie X."/>
            <person name="Hall N."/>
            <person name="Anjard C."/>
            <person name="Hemphill L."/>
            <person name="Bason N."/>
            <person name="Farbrother P."/>
            <person name="Desany B."/>
            <person name="Just E."/>
            <person name="Morio T."/>
            <person name="Rost R."/>
            <person name="Churcher C.M."/>
            <person name="Cooper J."/>
            <person name="Haydock S."/>
            <person name="van Driessche N."/>
            <person name="Cronin A."/>
            <person name="Goodhead I."/>
            <person name="Muzny D.M."/>
            <person name="Mourier T."/>
            <person name="Pain A."/>
            <person name="Lu M."/>
            <person name="Harper D."/>
            <person name="Lindsay R."/>
            <person name="Hauser H."/>
            <person name="James K.D."/>
            <person name="Quiles M."/>
            <person name="Madan Babu M."/>
            <person name="Saito T."/>
            <person name="Buchrieser C."/>
            <person name="Wardroper A."/>
            <person name="Felder M."/>
            <person name="Thangavelu M."/>
            <person name="Johnson D."/>
            <person name="Knights A."/>
            <person name="Loulseged H."/>
            <person name="Mungall K.L."/>
            <person name="Oliver K."/>
            <person name="Price C."/>
            <person name="Quail M.A."/>
            <person name="Urushihara H."/>
            <person name="Hernandez J."/>
            <person name="Rabbinowitsch E."/>
            <person name="Steffen D."/>
            <person name="Sanders M."/>
            <person name="Ma J."/>
            <person name="Kohara Y."/>
            <person name="Sharp S."/>
            <person name="Simmonds M.N."/>
            <person name="Spiegler S."/>
            <person name="Tivey A."/>
            <person name="Sugano S."/>
            <person name="White B."/>
            <person name="Walker D."/>
            <person name="Woodward J.R."/>
            <person name="Winckler T."/>
            <person name="Tanaka Y."/>
            <person name="Shaulsky G."/>
            <person name="Schleicher M."/>
            <person name="Weinstock G.M."/>
            <person name="Rosenthal A."/>
            <person name="Cox E.C."/>
            <person name="Chisholm R.L."/>
            <person name="Gibbs R.A."/>
            <person name="Loomis W.F."/>
            <person name="Platzer M."/>
            <person name="Kay R.R."/>
            <person name="Williams J.G."/>
            <person name="Dear P.H."/>
            <person name="Noegel A.A."/>
            <person name="Barrell B.G."/>
            <person name="Kuspa A."/>
        </authorList>
    </citation>
    <scope>NUCLEOTIDE SEQUENCE [LARGE SCALE GENOMIC DNA]</scope>
    <source>
        <strain>AX4</strain>
    </source>
</reference>
<dbReference type="EC" id="3.1.3.16"/>
<dbReference type="EMBL" id="AAFI02000008">
    <property type="protein sequence ID" value="EAL71073.1"/>
    <property type="molecule type" value="Genomic_DNA"/>
</dbReference>
<dbReference type="RefSeq" id="XP_644923.1">
    <property type="nucleotide sequence ID" value="XM_639831.1"/>
</dbReference>
<dbReference type="SMR" id="Q558Z3"/>
<dbReference type="FunCoup" id="Q558Z3">
    <property type="interactions" value="945"/>
</dbReference>
<dbReference type="STRING" id="44689.Q558Z3"/>
<dbReference type="PaxDb" id="44689-DDB0202722"/>
<dbReference type="EnsemblProtists" id="EAL71073">
    <property type="protein sequence ID" value="EAL71073"/>
    <property type="gene ID" value="DDB_G0272871"/>
</dbReference>
<dbReference type="GeneID" id="8618602"/>
<dbReference type="KEGG" id="ddi:DDB_G0272871"/>
<dbReference type="dictyBase" id="DDB_G0272871">
    <property type="gene designation" value="ssu72"/>
</dbReference>
<dbReference type="VEuPathDB" id="AmoebaDB:DDB_G0272871"/>
<dbReference type="eggNOG" id="KOG2424">
    <property type="taxonomic scope" value="Eukaryota"/>
</dbReference>
<dbReference type="HOGENOM" id="CLU_062463_2_1_1"/>
<dbReference type="InParanoid" id="Q558Z3"/>
<dbReference type="OMA" id="PNCYEFG"/>
<dbReference type="PhylomeDB" id="Q558Z3"/>
<dbReference type="Reactome" id="R-DDI-6807505">
    <property type="pathway name" value="RNA polymerase II transcribes snRNA genes"/>
</dbReference>
<dbReference type="PRO" id="PR:Q558Z3"/>
<dbReference type="Proteomes" id="UP000002195">
    <property type="component" value="Chromosome 2"/>
</dbReference>
<dbReference type="GO" id="GO:0005847">
    <property type="term" value="C:mRNA cleavage and polyadenylation specificity factor complex"/>
    <property type="evidence" value="ECO:0000318"/>
    <property type="project" value="GO_Central"/>
</dbReference>
<dbReference type="GO" id="GO:0008420">
    <property type="term" value="F:RNA polymerase II CTD heptapeptide repeat phosphatase activity"/>
    <property type="evidence" value="ECO:0000318"/>
    <property type="project" value="GO_Central"/>
</dbReference>
<dbReference type="GO" id="GO:0006397">
    <property type="term" value="P:mRNA processing"/>
    <property type="evidence" value="ECO:0007669"/>
    <property type="project" value="UniProtKB-KW"/>
</dbReference>
<dbReference type="GO" id="GO:0006369">
    <property type="term" value="P:termination of RNA polymerase II transcription"/>
    <property type="evidence" value="ECO:0000318"/>
    <property type="project" value="GO_Central"/>
</dbReference>
<dbReference type="FunFam" id="3.40.50.2300:FF:000920">
    <property type="match status" value="1"/>
</dbReference>
<dbReference type="FunFam" id="3.40.50.2300:FF:000405">
    <property type="entry name" value="RNA polymerase II subunit A C-terminal domain phosphatase"/>
    <property type="match status" value="1"/>
</dbReference>
<dbReference type="Gene3D" id="3.40.50.2300">
    <property type="match status" value="2"/>
</dbReference>
<dbReference type="InterPro" id="IPR006811">
    <property type="entry name" value="RNA_pol_II_suA"/>
</dbReference>
<dbReference type="PANTHER" id="PTHR20383">
    <property type="entry name" value="RNA POLYMERASE II SUBUNIT A C-TERMINAL DOMAIN PHOSPHATASE"/>
    <property type="match status" value="1"/>
</dbReference>
<dbReference type="Pfam" id="PF04722">
    <property type="entry name" value="Ssu72"/>
    <property type="match status" value="1"/>
</dbReference>
<accession>Q558Z3</accession>
<sequence>MSTQSPTSTNNNISNIANQCNKRIAMVCASNQNRSLEAHHLFVKNGFKNIRSFGTSAHCKLPGPSIHQPNIFSFGTPYQEIYTSLKNQDQELYIRNGLLNMLERNISVKLAPEKWQEEQQSKFEIVYTFDQRVYDAVIEDLLQRDVSSSLLQPVHIINLQVKDTHEEAVGGAQHALEITSIIEKTLNWEEKLDQILEDFYKQTSRQFLHTLMFY</sequence>
<organism>
    <name type="scientific">Dictyostelium discoideum</name>
    <name type="common">Social amoeba</name>
    <dbReference type="NCBI Taxonomy" id="44689"/>
    <lineage>
        <taxon>Eukaryota</taxon>
        <taxon>Amoebozoa</taxon>
        <taxon>Evosea</taxon>
        <taxon>Eumycetozoa</taxon>
        <taxon>Dictyostelia</taxon>
        <taxon>Dictyosteliales</taxon>
        <taxon>Dictyosteliaceae</taxon>
        <taxon>Dictyostelium</taxon>
    </lineage>
</organism>